<proteinExistence type="inferred from homology"/>
<feature type="chain" id="PRO_0000346554" description="Urease accessory protein UreD 1">
    <location>
        <begin position="1"/>
        <end position="280"/>
    </location>
</feature>
<accession>A5EDB3</accession>
<comment type="function">
    <text evidence="1">Required for maturation of urease via the functional incorporation of the urease nickel metallocenter.</text>
</comment>
<comment type="subunit">
    <text evidence="1">UreD, UreF and UreG form a complex that acts as a GTP-hydrolysis-dependent molecular chaperone, activating the urease apoprotein by helping to assemble the nickel containing metallocenter of UreC. The UreE protein probably delivers the nickel.</text>
</comment>
<comment type="subcellular location">
    <subcellularLocation>
        <location evidence="1">Cytoplasm</location>
    </subcellularLocation>
</comment>
<comment type="similarity">
    <text evidence="1">Belongs to the UreD family.</text>
</comment>
<gene>
    <name evidence="1" type="primary">ureD1</name>
    <name type="ordered locus">BBta_1964</name>
</gene>
<reference key="1">
    <citation type="journal article" date="2007" name="Science">
        <title>Legumes symbioses: absence of nod genes in photosynthetic bradyrhizobia.</title>
        <authorList>
            <person name="Giraud E."/>
            <person name="Moulin L."/>
            <person name="Vallenet D."/>
            <person name="Barbe V."/>
            <person name="Cytryn E."/>
            <person name="Avarre J.-C."/>
            <person name="Jaubert M."/>
            <person name="Simon D."/>
            <person name="Cartieaux F."/>
            <person name="Prin Y."/>
            <person name="Bena G."/>
            <person name="Hannibal L."/>
            <person name="Fardoux J."/>
            <person name="Kojadinovic M."/>
            <person name="Vuillet L."/>
            <person name="Lajus A."/>
            <person name="Cruveiller S."/>
            <person name="Rouy Z."/>
            <person name="Mangenot S."/>
            <person name="Segurens B."/>
            <person name="Dossat C."/>
            <person name="Franck W.L."/>
            <person name="Chang W.-S."/>
            <person name="Saunders E."/>
            <person name="Bruce D."/>
            <person name="Richardson P."/>
            <person name="Normand P."/>
            <person name="Dreyfus B."/>
            <person name="Pignol D."/>
            <person name="Stacey G."/>
            <person name="Emerich D."/>
            <person name="Vermeglio A."/>
            <person name="Medigue C."/>
            <person name="Sadowsky M."/>
        </authorList>
    </citation>
    <scope>NUCLEOTIDE SEQUENCE [LARGE SCALE GENOMIC DNA]</scope>
    <source>
        <strain>BTAi1 / ATCC BAA-1182</strain>
    </source>
</reference>
<sequence length="280" mass="29137">MRSPQLSCSASEGRAVEAALSVEHAGGRSMLRRQHVGYPLHVTRGFYLDAARPDLLTLYLQSASGGLYAGDRIGLDLSVARGAAFHLTTQSATVVRDGRGRGAVQRLAVNVEAGAFCAVTSDPYVLFPGAELALASEATVADDAVLCMADGFAVHDPHARGRSFTEFSSRLRIRRPDGRLLLQDAGRISGEDLQGALGRFAAAANLVLIAPPDRLPPVKELQQAADRCGALAGASAAPNESGLVLRVLASDGGTLSCAMEAAFHVAAAGALGVALARRRK</sequence>
<organism>
    <name type="scientific">Bradyrhizobium sp. (strain BTAi1 / ATCC BAA-1182)</name>
    <dbReference type="NCBI Taxonomy" id="288000"/>
    <lineage>
        <taxon>Bacteria</taxon>
        <taxon>Pseudomonadati</taxon>
        <taxon>Pseudomonadota</taxon>
        <taxon>Alphaproteobacteria</taxon>
        <taxon>Hyphomicrobiales</taxon>
        <taxon>Nitrobacteraceae</taxon>
        <taxon>Bradyrhizobium</taxon>
    </lineage>
</organism>
<protein>
    <recommendedName>
        <fullName evidence="1">Urease accessory protein UreD 1</fullName>
    </recommendedName>
</protein>
<name>URED1_BRASB</name>
<dbReference type="EMBL" id="CP000494">
    <property type="protein sequence ID" value="ABQ34157.1"/>
    <property type="molecule type" value="Genomic_DNA"/>
</dbReference>
<dbReference type="RefSeq" id="WP_012042187.1">
    <property type="nucleotide sequence ID" value="NC_009485.1"/>
</dbReference>
<dbReference type="SMR" id="A5EDB3"/>
<dbReference type="STRING" id="288000.BBta_1964"/>
<dbReference type="KEGG" id="bbt:BBta_1964"/>
<dbReference type="eggNOG" id="COG0829">
    <property type="taxonomic scope" value="Bacteria"/>
</dbReference>
<dbReference type="HOGENOM" id="CLU_056339_1_1_5"/>
<dbReference type="OrthoDB" id="9807968at2"/>
<dbReference type="Proteomes" id="UP000000246">
    <property type="component" value="Chromosome"/>
</dbReference>
<dbReference type="GO" id="GO:0005737">
    <property type="term" value="C:cytoplasm"/>
    <property type="evidence" value="ECO:0007669"/>
    <property type="project" value="UniProtKB-SubCell"/>
</dbReference>
<dbReference type="GO" id="GO:0016151">
    <property type="term" value="F:nickel cation binding"/>
    <property type="evidence" value="ECO:0007669"/>
    <property type="project" value="UniProtKB-UniRule"/>
</dbReference>
<dbReference type="HAMAP" id="MF_01384">
    <property type="entry name" value="UreD"/>
    <property type="match status" value="1"/>
</dbReference>
<dbReference type="InterPro" id="IPR002669">
    <property type="entry name" value="UreD"/>
</dbReference>
<dbReference type="PANTHER" id="PTHR33643">
    <property type="entry name" value="UREASE ACCESSORY PROTEIN D"/>
    <property type="match status" value="1"/>
</dbReference>
<dbReference type="PANTHER" id="PTHR33643:SF1">
    <property type="entry name" value="UREASE ACCESSORY PROTEIN D"/>
    <property type="match status" value="1"/>
</dbReference>
<dbReference type="Pfam" id="PF01774">
    <property type="entry name" value="UreD"/>
    <property type="match status" value="1"/>
</dbReference>
<keyword id="KW-0143">Chaperone</keyword>
<keyword id="KW-0963">Cytoplasm</keyword>
<keyword id="KW-0996">Nickel insertion</keyword>
<keyword id="KW-1185">Reference proteome</keyword>
<evidence type="ECO:0000255" key="1">
    <source>
        <dbReference type="HAMAP-Rule" id="MF_01384"/>
    </source>
</evidence>